<accession>P51810</accession>
<accession>Q6NTI7</accession>
<comment type="function">
    <text evidence="3 7 14 15 17">Receptor for tyrosine, L-DOPA and dopamine. After binding to L-DOPA, stimulates Ca(2+) influx into the cytoplasm, increases secretion of the neurotrophic factor SERPINF1 and relocalizes beta arrestin at the plasma membrane; this ligand-dependent signaling occurs through a G(q)-mediated pathway in melanocytic cells. Its activity is mediated by G proteins which activate the phosphoinositide signaling pathway. Also plays a role as an intracellular G protein-coupled receptor involved in melanosome biogenesis, organization and transport.</text>
</comment>
<comment type="subunit">
    <text evidence="3 7 17">Interacts with heterotrimeric G(i) proteins. Interacts with ARRB1 and ARRB2. Interacts with MLANA.</text>
</comment>
<comment type="interaction">
    <interactant intactId="EBI-2509708">
        <id>P51810</id>
    </interactant>
    <interactant intactId="EBI-25397340">
        <id>P14679</id>
        <label>TYR</label>
    </interactant>
    <organismsDiffer>false</organismsDiffer>
    <experiments>4</experiments>
</comment>
<comment type="subcellular location">
    <subcellularLocation>
        <location evidence="3 6 7 8 10">Melanosome membrane</location>
        <topology evidence="1">Multi-pass membrane protein</topology>
    </subcellularLocation>
    <subcellularLocation>
        <location evidence="7 8">Lysosome membrane</location>
        <topology evidence="1">Multi-pass membrane protein</topology>
    </subcellularLocation>
    <subcellularLocation>
        <location evidence="15">Apical cell membrane</location>
        <topology evidence="1">Multi-pass membrane protein</topology>
    </subcellularLocation>
    <text evidence="15">Distributed throughout the endo-melanosomal system but most of endogenous protein is localized in unpigmented stage II melanosomes. Its expression on the apical cell membrane is sensitive to tyrosine (PubMed:18828673).</text>
</comment>
<comment type="tissue specificity">
    <text evidence="15 18">Expressed at high levels in the retina, including the retinal pigment epithelium (RPE), and in melanocytes. Weak expression is observed in brain and adrenal gland.</text>
</comment>
<comment type="domain">
    <text>The cytoplasmic domain 3 and the C-terminus tail domain contain the lysosomal sorting signals and are necessary and sufficient for intracellular retention and delivery to lysosomal and melanosomal, respectively in melanocytic and non-melanocytic cells.</text>
</comment>
<comment type="PTM">
    <text evidence="4">Glycosylated.</text>
</comment>
<comment type="PTM">
    <text evidence="7">Phosphorylated.</text>
</comment>
<comment type="disease" evidence="4 5 7 8 9 12 13 14 16 19 20 21">
    <disease id="DI-02082">
        <name>Albinism ocular 1</name>
        <acronym>OA1</acronym>
        <description>Form of albinism affecting only the eye. Pigment of the hair and skin is normal or only slightly diluted. Eyes may be severely affected with photophobia and reduced visual acuity. Nystagmus or strabismus are often associated. The irides and fundus are depigmented.</description>
        <dbReference type="MIM" id="300500"/>
    </disease>
    <text>The disease is caused by variants affecting the gene represented in this entry.</text>
</comment>
<comment type="disease" evidence="11">
    <disease id="DI-02828">
        <name>Nystagmus 6, congenital, X-linked</name>
        <acronym>NYS6</acronym>
        <description>A form of nystagmus, a condition defined as conjugated, spontaneous and involuntary ocular oscillations that appear at birth or during the first three months of life. Other associated features may include mildly decreased visual acuity, strabismus, astigmatism, and occasionally head nodding.</description>
        <dbReference type="MIM" id="300814"/>
    </disease>
    <text>The disease is caused by variants affecting the gene represented in this entry.</text>
</comment>
<comment type="similarity">
    <text evidence="22">Belongs to the G-protein coupled receptor OA family.</text>
</comment>
<comment type="sequence caution" evidence="22">
    <conflict type="erroneous initiation">
        <sequence resource="EMBL-CDS" id="AAH68977"/>
    </conflict>
    <text>Extended N-terminus.</text>
</comment>
<comment type="sequence caution" evidence="22">
    <conflict type="erroneous initiation">
        <sequence resource="EMBL-CDS" id="CAA88742"/>
    </conflict>
    <text>Extended N-terminus.</text>
</comment>
<comment type="sequence caution" evidence="22">
    <conflict type="erroneous initiation">
        <sequence resource="EMBL-CDS" id="EAW98773"/>
    </conflict>
    <text>Extended N-terminus.</text>
</comment>
<comment type="online information" name="Albinism database (ADB)">
    <link uri="http://www.ifpcs.org/albinism/oa1mut.html"/>
    <text>GPR143 mutations</text>
</comment>
<organism>
    <name type="scientific">Homo sapiens</name>
    <name type="common">Human</name>
    <dbReference type="NCBI Taxonomy" id="9606"/>
    <lineage>
        <taxon>Eukaryota</taxon>
        <taxon>Metazoa</taxon>
        <taxon>Chordata</taxon>
        <taxon>Craniata</taxon>
        <taxon>Vertebrata</taxon>
        <taxon>Euteleostomi</taxon>
        <taxon>Mammalia</taxon>
        <taxon>Eutheria</taxon>
        <taxon>Euarchontoglires</taxon>
        <taxon>Primates</taxon>
        <taxon>Haplorrhini</taxon>
        <taxon>Catarrhini</taxon>
        <taxon>Hominidae</taxon>
        <taxon>Homo</taxon>
    </lineage>
</organism>
<evidence type="ECO:0000255" key="1"/>
<evidence type="ECO:0000256" key="2">
    <source>
        <dbReference type="SAM" id="MobiDB-lite"/>
    </source>
</evidence>
<evidence type="ECO:0000269" key="3">
    <source>
    </source>
</evidence>
<evidence type="ECO:0000269" key="4">
    <source>
    </source>
</evidence>
<evidence type="ECO:0000269" key="5">
    <source>
    </source>
</evidence>
<evidence type="ECO:0000269" key="6">
    <source>
    </source>
</evidence>
<evidence type="ECO:0000269" key="7">
    <source>
    </source>
</evidence>
<evidence type="ECO:0000269" key="8">
    <source>
    </source>
</evidence>
<evidence type="ECO:0000269" key="9">
    <source>
    </source>
</evidence>
<evidence type="ECO:0000269" key="10">
    <source>
    </source>
</evidence>
<evidence type="ECO:0000269" key="11">
    <source>
    </source>
</evidence>
<evidence type="ECO:0000269" key="12">
    <source>
    </source>
</evidence>
<evidence type="ECO:0000269" key="13">
    <source>
    </source>
</evidence>
<evidence type="ECO:0000269" key="14">
    <source>
    </source>
</evidence>
<evidence type="ECO:0000269" key="15">
    <source>
    </source>
</evidence>
<evidence type="ECO:0000269" key="16">
    <source>
    </source>
</evidence>
<evidence type="ECO:0000269" key="17">
    <source>
    </source>
</evidence>
<evidence type="ECO:0000269" key="18">
    <source>
    </source>
</evidence>
<evidence type="ECO:0000269" key="19">
    <source>
    </source>
</evidence>
<evidence type="ECO:0000269" key="20">
    <source>
    </source>
</evidence>
<evidence type="ECO:0000269" key="21">
    <source>
    </source>
</evidence>
<evidence type="ECO:0000305" key="22"/>
<name>GP143_HUMAN</name>
<reference key="1">
    <citation type="journal article" date="1995" name="Nat. Genet.">
        <title>Cloning of the gene for ocular albinism type 1 from the distal short arm of the X chromosome.</title>
        <authorList>
            <person name="Bassi M.T."/>
            <person name="Schiaffino M.V."/>
            <person name="Renieri A."/>
            <person name="de Nigris F."/>
            <person name="Galli L."/>
            <person name="Bruttini M."/>
            <person name="Gebbia M.A.B."/>
            <person name="Bergen A.A.B."/>
            <person name="Lewis R."/>
            <person name="Ballabio A."/>
        </authorList>
    </citation>
    <scope>NUCLEOTIDE SEQUENCE [MRNA]</scope>
    <scope>TISSUE SPECIFICITY</scope>
    <source>
        <tissue>Retina</tissue>
    </source>
</reference>
<reference key="2">
    <citation type="journal article" date="2005" name="Nature">
        <title>The DNA sequence of the human X chromosome.</title>
        <authorList>
            <person name="Ross M.T."/>
            <person name="Grafham D.V."/>
            <person name="Coffey A.J."/>
            <person name="Scherer S."/>
            <person name="McLay K."/>
            <person name="Muzny D."/>
            <person name="Platzer M."/>
            <person name="Howell G.R."/>
            <person name="Burrows C."/>
            <person name="Bird C.P."/>
            <person name="Frankish A."/>
            <person name="Lovell F.L."/>
            <person name="Howe K.L."/>
            <person name="Ashurst J.L."/>
            <person name="Fulton R.S."/>
            <person name="Sudbrak R."/>
            <person name="Wen G."/>
            <person name="Jones M.C."/>
            <person name="Hurles M.E."/>
            <person name="Andrews T.D."/>
            <person name="Scott C.E."/>
            <person name="Searle S."/>
            <person name="Ramser J."/>
            <person name="Whittaker A."/>
            <person name="Deadman R."/>
            <person name="Carter N.P."/>
            <person name="Hunt S.E."/>
            <person name="Chen R."/>
            <person name="Cree A."/>
            <person name="Gunaratne P."/>
            <person name="Havlak P."/>
            <person name="Hodgson A."/>
            <person name="Metzker M.L."/>
            <person name="Richards S."/>
            <person name="Scott G."/>
            <person name="Steffen D."/>
            <person name="Sodergren E."/>
            <person name="Wheeler D.A."/>
            <person name="Worley K.C."/>
            <person name="Ainscough R."/>
            <person name="Ambrose K.D."/>
            <person name="Ansari-Lari M.A."/>
            <person name="Aradhya S."/>
            <person name="Ashwell R.I."/>
            <person name="Babbage A.K."/>
            <person name="Bagguley C.L."/>
            <person name="Ballabio A."/>
            <person name="Banerjee R."/>
            <person name="Barker G.E."/>
            <person name="Barlow K.F."/>
            <person name="Barrett I.P."/>
            <person name="Bates K.N."/>
            <person name="Beare D.M."/>
            <person name="Beasley H."/>
            <person name="Beasley O."/>
            <person name="Beck A."/>
            <person name="Bethel G."/>
            <person name="Blechschmidt K."/>
            <person name="Brady N."/>
            <person name="Bray-Allen S."/>
            <person name="Bridgeman A.M."/>
            <person name="Brown A.J."/>
            <person name="Brown M.J."/>
            <person name="Bonnin D."/>
            <person name="Bruford E.A."/>
            <person name="Buhay C."/>
            <person name="Burch P."/>
            <person name="Burford D."/>
            <person name="Burgess J."/>
            <person name="Burrill W."/>
            <person name="Burton J."/>
            <person name="Bye J.M."/>
            <person name="Carder C."/>
            <person name="Carrel L."/>
            <person name="Chako J."/>
            <person name="Chapman J.C."/>
            <person name="Chavez D."/>
            <person name="Chen E."/>
            <person name="Chen G."/>
            <person name="Chen Y."/>
            <person name="Chen Z."/>
            <person name="Chinault C."/>
            <person name="Ciccodicola A."/>
            <person name="Clark S.Y."/>
            <person name="Clarke G."/>
            <person name="Clee C.M."/>
            <person name="Clegg S."/>
            <person name="Clerc-Blankenburg K."/>
            <person name="Clifford K."/>
            <person name="Cobley V."/>
            <person name="Cole C.G."/>
            <person name="Conquer J.S."/>
            <person name="Corby N."/>
            <person name="Connor R.E."/>
            <person name="David R."/>
            <person name="Davies J."/>
            <person name="Davis C."/>
            <person name="Davis J."/>
            <person name="Delgado O."/>
            <person name="Deshazo D."/>
            <person name="Dhami P."/>
            <person name="Ding Y."/>
            <person name="Dinh H."/>
            <person name="Dodsworth S."/>
            <person name="Draper H."/>
            <person name="Dugan-Rocha S."/>
            <person name="Dunham A."/>
            <person name="Dunn M."/>
            <person name="Durbin K.J."/>
            <person name="Dutta I."/>
            <person name="Eades T."/>
            <person name="Ellwood M."/>
            <person name="Emery-Cohen A."/>
            <person name="Errington H."/>
            <person name="Evans K.L."/>
            <person name="Faulkner L."/>
            <person name="Francis F."/>
            <person name="Frankland J."/>
            <person name="Fraser A.E."/>
            <person name="Galgoczy P."/>
            <person name="Gilbert J."/>
            <person name="Gill R."/>
            <person name="Gloeckner G."/>
            <person name="Gregory S.G."/>
            <person name="Gribble S."/>
            <person name="Griffiths C."/>
            <person name="Grocock R."/>
            <person name="Gu Y."/>
            <person name="Gwilliam R."/>
            <person name="Hamilton C."/>
            <person name="Hart E.A."/>
            <person name="Hawes A."/>
            <person name="Heath P.D."/>
            <person name="Heitmann K."/>
            <person name="Hennig S."/>
            <person name="Hernandez J."/>
            <person name="Hinzmann B."/>
            <person name="Ho S."/>
            <person name="Hoffs M."/>
            <person name="Howden P.J."/>
            <person name="Huckle E.J."/>
            <person name="Hume J."/>
            <person name="Hunt P.J."/>
            <person name="Hunt A.R."/>
            <person name="Isherwood J."/>
            <person name="Jacob L."/>
            <person name="Johnson D."/>
            <person name="Jones S."/>
            <person name="de Jong P.J."/>
            <person name="Joseph S.S."/>
            <person name="Keenan S."/>
            <person name="Kelly S."/>
            <person name="Kershaw J.K."/>
            <person name="Khan Z."/>
            <person name="Kioschis P."/>
            <person name="Klages S."/>
            <person name="Knights A.J."/>
            <person name="Kosiura A."/>
            <person name="Kovar-Smith C."/>
            <person name="Laird G.K."/>
            <person name="Langford C."/>
            <person name="Lawlor S."/>
            <person name="Leversha M."/>
            <person name="Lewis L."/>
            <person name="Liu W."/>
            <person name="Lloyd C."/>
            <person name="Lloyd D.M."/>
            <person name="Loulseged H."/>
            <person name="Loveland J.E."/>
            <person name="Lovell J.D."/>
            <person name="Lozado R."/>
            <person name="Lu J."/>
            <person name="Lyne R."/>
            <person name="Ma J."/>
            <person name="Maheshwari M."/>
            <person name="Matthews L.H."/>
            <person name="McDowall J."/>
            <person name="McLaren S."/>
            <person name="McMurray A."/>
            <person name="Meidl P."/>
            <person name="Meitinger T."/>
            <person name="Milne S."/>
            <person name="Miner G."/>
            <person name="Mistry S.L."/>
            <person name="Morgan M."/>
            <person name="Morris S."/>
            <person name="Mueller I."/>
            <person name="Mullikin J.C."/>
            <person name="Nguyen N."/>
            <person name="Nordsiek G."/>
            <person name="Nyakatura G."/>
            <person name="O'dell C.N."/>
            <person name="Okwuonu G."/>
            <person name="Palmer S."/>
            <person name="Pandian R."/>
            <person name="Parker D."/>
            <person name="Parrish J."/>
            <person name="Pasternak S."/>
            <person name="Patel D."/>
            <person name="Pearce A.V."/>
            <person name="Pearson D.M."/>
            <person name="Pelan S.E."/>
            <person name="Perez L."/>
            <person name="Porter K.M."/>
            <person name="Ramsey Y."/>
            <person name="Reichwald K."/>
            <person name="Rhodes S."/>
            <person name="Ridler K.A."/>
            <person name="Schlessinger D."/>
            <person name="Schueler M.G."/>
            <person name="Sehra H.K."/>
            <person name="Shaw-Smith C."/>
            <person name="Shen H."/>
            <person name="Sheridan E.M."/>
            <person name="Shownkeen R."/>
            <person name="Skuce C.D."/>
            <person name="Smith M.L."/>
            <person name="Sotheran E.C."/>
            <person name="Steingruber H.E."/>
            <person name="Steward C.A."/>
            <person name="Storey R."/>
            <person name="Swann R.M."/>
            <person name="Swarbreck D."/>
            <person name="Tabor P.E."/>
            <person name="Taudien S."/>
            <person name="Taylor T."/>
            <person name="Teague B."/>
            <person name="Thomas K."/>
            <person name="Thorpe A."/>
            <person name="Timms K."/>
            <person name="Tracey A."/>
            <person name="Trevanion S."/>
            <person name="Tromans A.C."/>
            <person name="d'Urso M."/>
            <person name="Verduzco D."/>
            <person name="Villasana D."/>
            <person name="Waldron L."/>
            <person name="Wall M."/>
            <person name="Wang Q."/>
            <person name="Warren J."/>
            <person name="Warry G.L."/>
            <person name="Wei X."/>
            <person name="West A."/>
            <person name="Whitehead S.L."/>
            <person name="Whiteley M.N."/>
            <person name="Wilkinson J.E."/>
            <person name="Willey D.L."/>
            <person name="Williams G."/>
            <person name="Williams L."/>
            <person name="Williamson A."/>
            <person name="Williamson H."/>
            <person name="Wilming L."/>
            <person name="Woodmansey R.L."/>
            <person name="Wray P.W."/>
            <person name="Yen J."/>
            <person name="Zhang J."/>
            <person name="Zhou J."/>
            <person name="Zoghbi H."/>
            <person name="Zorilla S."/>
            <person name="Buck D."/>
            <person name="Reinhardt R."/>
            <person name="Poustka A."/>
            <person name="Rosenthal A."/>
            <person name="Lehrach H."/>
            <person name="Meindl A."/>
            <person name="Minx P.J."/>
            <person name="Hillier L.W."/>
            <person name="Willard H.F."/>
            <person name="Wilson R.K."/>
            <person name="Waterston R.H."/>
            <person name="Rice C.M."/>
            <person name="Vaudin M."/>
            <person name="Coulson A."/>
            <person name="Nelson D.L."/>
            <person name="Weinstock G."/>
            <person name="Sulston J.E."/>
            <person name="Durbin R.M."/>
            <person name="Hubbard T."/>
            <person name="Gibbs R.A."/>
            <person name="Beck S."/>
            <person name="Rogers J."/>
            <person name="Bentley D.R."/>
        </authorList>
    </citation>
    <scope>NUCLEOTIDE SEQUENCE [LARGE SCALE GENOMIC DNA]</scope>
</reference>
<reference key="3">
    <citation type="submission" date="2005-07" db="EMBL/GenBank/DDBJ databases">
        <authorList>
            <person name="Mural R.J."/>
            <person name="Istrail S."/>
            <person name="Sutton G.G."/>
            <person name="Florea L."/>
            <person name="Halpern A.L."/>
            <person name="Mobarry C.M."/>
            <person name="Lippert R."/>
            <person name="Walenz B."/>
            <person name="Shatkay H."/>
            <person name="Dew I."/>
            <person name="Miller J.R."/>
            <person name="Flanigan M.J."/>
            <person name="Edwards N.J."/>
            <person name="Bolanos R."/>
            <person name="Fasulo D."/>
            <person name="Halldorsson B.V."/>
            <person name="Hannenhalli S."/>
            <person name="Turner R."/>
            <person name="Yooseph S."/>
            <person name="Lu F."/>
            <person name="Nusskern D.R."/>
            <person name="Shue B.C."/>
            <person name="Zheng X.H."/>
            <person name="Zhong F."/>
            <person name="Delcher A.L."/>
            <person name="Huson D.H."/>
            <person name="Kravitz S.A."/>
            <person name="Mouchard L."/>
            <person name="Reinert K."/>
            <person name="Remington K.A."/>
            <person name="Clark A.G."/>
            <person name="Waterman M.S."/>
            <person name="Eichler E.E."/>
            <person name="Adams M.D."/>
            <person name="Hunkapiller M.W."/>
            <person name="Myers E.W."/>
            <person name="Venter J.C."/>
        </authorList>
    </citation>
    <scope>NUCLEOTIDE SEQUENCE [LARGE SCALE GENOMIC DNA]</scope>
</reference>
<reference key="4">
    <citation type="journal article" date="2004" name="Genome Res.">
        <title>The status, quality, and expansion of the NIH full-length cDNA project: the Mammalian Gene Collection (MGC).</title>
        <authorList>
            <consortium name="The MGC Project Team"/>
        </authorList>
    </citation>
    <scope>NUCLEOTIDE SEQUENCE [LARGE SCALE MRNA]</scope>
    <source>
        <tissue>Skin</tissue>
    </source>
</reference>
<reference key="5">
    <citation type="journal article" date="1999" name="Hum. Mutat.">
        <title>Molecular basis of albinism: mutations and polymorphisms of pigmentation genes associated with albinism.</title>
        <authorList>
            <person name="Oetting W.S."/>
            <person name="King R.A."/>
        </authorList>
    </citation>
    <scope>REVIEW ON OA1 VARIANTS</scope>
</reference>
<reference key="6">
    <citation type="journal article" date="1999" name="Nat. Genet.">
        <title>Ocular albinism: evidence for a defect in an intracellular signal transduction system.</title>
        <authorList>
            <person name="Schiaffino M.V."/>
            <person name="d'Addio M."/>
            <person name="Alloni A."/>
            <person name="Baschirotto C."/>
            <person name="Valetti C."/>
            <person name="Cortese K."/>
            <person name="Puri C."/>
            <person name="Bassi M.T."/>
            <person name="Colla C."/>
            <person name="De Luca M."/>
            <person name="Tacchetti C."/>
            <person name="Ballabio A."/>
        </authorList>
    </citation>
    <scope>FUNCTION</scope>
    <scope>SUBUNIT</scope>
    <scope>SUBCELLULAR LOCATION</scope>
    <source>
        <tissue>Melanocyte</tissue>
    </source>
</reference>
<reference key="7">
    <citation type="journal article" date="2000" name="Hum. Mol. Genet.">
        <title>Defective intracellular transport and processing of OA1 is a major cause of ocular albinism type 1.</title>
        <authorList>
            <person name="d'Addio M."/>
            <person name="Pizzigoni A."/>
            <person name="Bassi M.T."/>
            <person name="Baschirotto C."/>
            <person name="Valetti C."/>
            <person name="Incerti B."/>
            <person name="Clementi M."/>
            <person name="De Luca M."/>
            <person name="Ballabio A."/>
            <person name="Schiaffino M.V."/>
        </authorList>
    </citation>
    <scope>GLYCOSYLATION</scope>
    <scope>CHARACTERIZATION OF VARIANTS OA1 CYS-5; ASP-35; ASN-78; ASP-84; SER-116; GLU-118; ARG-133; ASP-173; ASN-261; THR-290 DEL AND GLY-292</scope>
</reference>
<reference key="8">
    <citation type="journal article" date="2002" name="Hum. Mutat.">
        <title>New insights into ocular albinism type 1 (OA1): mutations and polymorphisms of the OA1 gene.</title>
        <authorList>
            <person name="Oetting W.S."/>
        </authorList>
    </citation>
    <scope>REVIEW ON OA1 VARIANTS</scope>
</reference>
<reference key="9">
    <citation type="journal article" date="2003" name="J. Proteome Res.">
        <title>Proteomic analysis of early melanosomes: identification of novel melanosomal proteins.</title>
        <authorList>
            <person name="Basrur V."/>
            <person name="Yang F."/>
            <person name="Kushimoto T."/>
            <person name="Higashimoto Y."/>
            <person name="Yasumoto K."/>
            <person name="Valencia J."/>
            <person name="Muller J."/>
            <person name="Vieira W.D."/>
            <person name="Watabe H."/>
            <person name="Shabanowitz J."/>
            <person name="Hearing V.J."/>
            <person name="Hunt D.F."/>
            <person name="Appella E."/>
        </authorList>
    </citation>
    <scope>SUBCELLULAR LOCATION [LARGE SCALE ANALYSIS]</scope>
    <source>
        <tissue>Melanoma</tissue>
    </source>
</reference>
<reference key="10">
    <citation type="journal article" date="2006" name="J. Cell Sci.">
        <title>An unconventional dileucine-based motif and a novel cytosolic motif are required for the lysosomal and melanosomal targeting of OA1.</title>
        <authorList>
            <person name="Piccirillo R."/>
            <person name="Palmisano I."/>
            <person name="Innamorati G."/>
            <person name="Bagnato P."/>
            <person name="Altimare D."/>
            <person name="Schiaffino M.V."/>
        </authorList>
    </citation>
    <scope>SUBCELLULAR LOCATION</scope>
    <scope>CHARACTERIZATION OF VARIANTS OA1 VAL-229; LYS-232; LYS-235 AND VAL-244</scope>
    <scope>MUTAGENESIS OF 224-LEU-LEU-225 AND 329-LEU-LEU-330</scope>
</reference>
<reference key="11">
    <citation type="journal article" date="2006" name="J. Proteome Res.">
        <title>Proteomic and bioinformatic characterization of the biogenesis and function of melanosomes.</title>
        <authorList>
            <person name="Chi A."/>
            <person name="Valencia J.C."/>
            <person name="Hu Z.-Z."/>
            <person name="Watabe H."/>
            <person name="Yamaguchi H."/>
            <person name="Mangini N.J."/>
            <person name="Huang H."/>
            <person name="Canfield V.A."/>
            <person name="Cheng K.C."/>
            <person name="Yang F."/>
            <person name="Abe R."/>
            <person name="Yamagishi S."/>
            <person name="Shabanowitz J."/>
            <person name="Hearing V.J."/>
            <person name="Wu C."/>
            <person name="Appella E."/>
            <person name="Hunt D.F."/>
        </authorList>
    </citation>
    <scope>SUBCELLULAR LOCATION [LARGE SCALE ANALYSIS]</scope>
    <source>
        <tissue>Melanoma</tissue>
    </source>
</reference>
<reference key="12">
    <citation type="journal article" date="2006" name="Pigment Cell Res.">
        <title>The melanosomal/lysosomal protein OA1 has properties of a G protein-coupled receptor.</title>
        <authorList>
            <person name="Innamorati G."/>
            <person name="Piccirillo R."/>
            <person name="Bagnato P."/>
            <person name="Palmisano I."/>
            <person name="Schiaffino M.V."/>
        </authorList>
    </citation>
    <scope>FUNCTION</scope>
    <scope>INTERACTION WITH ARRB1 AND ARRB1</scope>
    <scope>PHOSPHORYLATION</scope>
    <scope>CHARACTERIZATION OF VARIANT OA1 GLY-116</scope>
    <scope>SUBCELLULAR LOCATION</scope>
</reference>
<reference key="13">
    <citation type="journal article" date="2008" name="Hum. Mol. Genet.">
        <title>The ocular albinism type 1 protein, an intracellular G protein-coupled receptor, regulates melanosome transport in pigment cells.</title>
        <authorList>
            <person name="Palmisano I."/>
            <person name="Bagnato P."/>
            <person name="Palmigiano A."/>
            <person name="Innamorati G."/>
            <person name="Rotondo G."/>
            <person name="Altimare D."/>
            <person name="Venturi C."/>
            <person name="Sviderskaya E.V."/>
            <person name="Piccirillo R."/>
            <person name="Coppola M."/>
            <person name="Marigo V."/>
            <person name="Incerti B."/>
            <person name="Ballabio A."/>
            <person name="Surace E.M."/>
            <person name="Tacchetti C."/>
            <person name="Bennett D.C."/>
            <person name="Schiaffino M.V."/>
        </authorList>
    </citation>
    <scope>FUNCTION</scope>
    <scope>CHARACTERIZATION OF VARIANT OA1 LYS-232</scope>
</reference>
<reference key="14">
    <citation type="journal article" date="2008" name="PLoS Biol.">
        <title>L-DOPA is an endogenous ligand for OA1.</title>
        <authorList>
            <person name="Lopez V.M."/>
            <person name="Decatur C.L."/>
            <person name="Stamer W.D."/>
            <person name="Lynch R.M."/>
            <person name="McKay B.S."/>
        </authorList>
    </citation>
    <scope>FUNCTION</scope>
    <scope>SUBCELLULAR LOCATION</scope>
    <scope>TISSUE SPECIFICITY</scope>
</reference>
<reference key="15">
    <citation type="journal article" date="2009" name="Hum. Mol. Genet.">
        <title>The ocular albinism type 1 (OA1) G-protein-coupled receptor functions with MART-1 at early stages of melanogenesis to control melanosome identity and composition.</title>
        <authorList>
            <person name="Giordano F."/>
            <person name="Bonetti C."/>
            <person name="Surace E.M."/>
            <person name="Marigo V."/>
            <person name="Raposo G."/>
        </authorList>
    </citation>
    <scope>FUNCTION</scope>
    <scope>INTERACTION WITH MLANA</scope>
</reference>
<reference key="16">
    <citation type="journal article" date="1995" name="Hum. Mol. Genet.">
        <title>Analysis of the OA1 gene reveals mutations in only one-third of patients with X-linked ocular albinism.</title>
        <authorList>
            <person name="Schiaffino M.V."/>
            <person name="Bassi M.T."/>
            <person name="Balli L."/>
            <person name="Renieri A."/>
            <person name="Bruttini M."/>
            <person name="de Nigris F."/>
            <person name="Bergen A.A.B."/>
            <person name="Charles S.J."/>
            <person name="Yates J.R.W."/>
            <person name="Meindl A."/>
            <person name="Lewis R.A."/>
            <person name="King R.A."/>
            <person name="Ballabio A."/>
        </authorList>
    </citation>
    <scope>VARIANTS OA1 ASP-35; ASP-84; ASP-173; THR-290 DEL AND GLY-292</scope>
</reference>
<reference key="17">
    <citation type="journal article" date="1998" name="Am. J. Hum. Genet.">
        <title>OA1 mutations and deletions in X-linked ocular albinism.</title>
        <authorList>
            <person name="Schnur R.E."/>
            <person name="Gao M."/>
            <person name="Wick P.A."/>
            <person name="Keller M."/>
            <person name="Benke P.J."/>
            <person name="Edwards M.J."/>
            <person name="Grix A.W."/>
            <person name="Hockey A."/>
            <person name="Jung J.H."/>
            <person name="Kidd K.K."/>
            <person name="Kistenmacher M."/>
            <person name="Levin A.V."/>
            <person name="Lewis R.A."/>
            <person name="Musarella M.A."/>
            <person name="Nowakowski R.W."/>
            <person name="Orlow S.J."/>
            <person name="Pagon R.S."/>
            <person name="Pillers D.-A.M."/>
            <person name="Punnett H.H."/>
            <person name="Quinn G.E."/>
            <person name="Tezcan K."/>
            <person name="Wagstaff J."/>
            <person name="Weleber R.G."/>
        </authorList>
    </citation>
    <scope>VARIANTS OA1 ARG-84; ARG-116; GLU-118; ARG-133; VAL-138; ASN-152; LYS-232 AND LYS-235</scope>
</reference>
<reference key="18">
    <citation type="journal article" date="1998" name="Eur. J. Hum. Genet.">
        <title>X-linked ocular albinism: prevalence and mutations -- a national study.</title>
        <authorList>
            <person name="Rosenberg T."/>
            <person name="Schwartz M."/>
        </authorList>
    </citation>
    <scope>VARIANTS OA1 ASP-35; ARG-39; VAL-78; ARG-133 AND LYS-233</scope>
</reference>
<reference key="19">
    <citation type="journal article" date="2001" name="Hum. Genet.">
        <title>Diverse prevalence of large deletions within the OA1 gene in ocular albinism type 1 patients from Europe and North America.</title>
        <authorList>
            <person name="Bassi M.T."/>
            <person name="Bergen A.A."/>
            <person name="Bitoun P."/>
            <person name="Charles S.J."/>
            <person name="Clementi M."/>
            <person name="Gosselin R."/>
            <person name="Hurst J."/>
            <person name="Lewis R.A."/>
            <person name="Lorenz B."/>
            <person name="Meitinger T."/>
            <person name="Messiaen L."/>
            <person name="Ramesar R.S."/>
            <person name="Ballabio A."/>
            <person name="Schiaffino M.V."/>
        </authorList>
    </citation>
    <scope>VARIANTS OA1 CYS-5; ASN-78; SER-116; GLU-118; ARG-124; VAL-229; VAL-244; ASN-261; GLY-271 AND CYS-292</scope>
</reference>
<reference key="20">
    <citation type="journal article" date="2006" name="BMC Med. Genet.">
        <title>Eight previously unidentified mutations found in the OA1 ocular albinism gene.</title>
        <authorList>
            <person name="Mayeur H."/>
            <person name="Roche O."/>
            <person name="Vetu C."/>
            <person name="Jaliffa C."/>
            <person name="Marchant D."/>
            <person name="Dollfus H."/>
            <person name="Bonneau D."/>
            <person name="Munier F.L."/>
            <person name="Schorderet D.F."/>
            <person name="Levin A.V."/>
            <person name="Heon E."/>
            <person name="Sutherland J."/>
            <person name="Lacombe D."/>
            <person name="Said E."/>
            <person name="Mezer E."/>
            <person name="Kaplan J."/>
            <person name="Dufier J.L."/>
            <person name="Marsac C."/>
            <person name="Menasche M."/>
            <person name="Abitbol M."/>
        </authorList>
    </citation>
    <scope>VARIANTS OA1 VAL-81; TRP-116; PRO-134 AND ASN-166</scope>
</reference>
<reference key="21">
    <citation type="journal article" date="2007" name="Gene">
        <title>New mutations identified in the ocular albinism type 1 gene.</title>
        <authorList>
            <person name="Roma C."/>
            <person name="Ferrante P."/>
            <person name="Guardiola O."/>
            <person name="Ballabio A."/>
            <person name="Zollo M."/>
        </authorList>
    </citation>
    <scope>VARIANTS OA1 ARG-132; LYS-185; TRP-186 AND PRO-186</scope>
</reference>
<reference key="22">
    <citation type="journal article" date="2007" name="J. Hum. Genet.">
        <title>Identification of a novel GPR143 mutation in a large Chinese family with congenital nystagmus as the most prominent and consistent manifestation.</title>
        <authorList>
            <person name="Liu J.Y."/>
            <person name="Ren X."/>
            <person name="Yang X."/>
            <person name="Guo T."/>
            <person name="Yao Q."/>
            <person name="Li L."/>
            <person name="Dai X."/>
            <person name="Zhang M."/>
            <person name="Wang L."/>
            <person name="Liu M."/>
            <person name="Wang Q.K."/>
        </authorList>
    </citation>
    <scope>VARIANT NYS6 PHE-89</scope>
</reference>
<reference key="23">
    <citation type="journal article" date="2007" name="Mol. Vis.">
        <title>Identification of two novel mutations in families with X-linked ocular albinism.</title>
        <authorList>
            <person name="Iannaccone A."/>
            <person name="Gallaher K.T."/>
            <person name="Buchholz J."/>
            <person name="Jennings B.J."/>
            <person name="Neitz M."/>
            <person name="Sidjanin D.J."/>
        </authorList>
    </citation>
    <scope>VARIANT OA1 GLY-116</scope>
</reference>
<reference key="24">
    <citation type="journal article" date="2008" name="Mol. Vis.">
        <title>Novel GPR143 mutations and clinical characteristics in six Chinese families with X-linked ocular albinism.</title>
        <authorList>
            <person name="Fang S."/>
            <person name="Guo X."/>
            <person name="Jia X."/>
            <person name="Xiao X."/>
            <person name="Li S."/>
            <person name="Zhang Q."/>
        </authorList>
    </citation>
    <scope>VARIANTS OA1 LEU-80 DEL AND GLU-118</scope>
</reference>
<dbReference type="EMBL" id="Z48804">
    <property type="protein sequence ID" value="CAA88742.1"/>
    <property type="status" value="ALT_INIT"/>
    <property type="molecule type" value="mRNA"/>
</dbReference>
<dbReference type="EMBL" id="AC003036">
    <property type="status" value="NOT_ANNOTATED_CDS"/>
    <property type="molecule type" value="Genomic_DNA"/>
</dbReference>
<dbReference type="EMBL" id="AC090481">
    <property type="status" value="NOT_ANNOTATED_CDS"/>
    <property type="molecule type" value="Genomic_DNA"/>
</dbReference>
<dbReference type="EMBL" id="CH471074">
    <property type="protein sequence ID" value="EAW98773.1"/>
    <property type="status" value="ALT_INIT"/>
    <property type="molecule type" value="Genomic_DNA"/>
</dbReference>
<dbReference type="EMBL" id="BC068977">
    <property type="protein sequence ID" value="AAH68977.1"/>
    <property type="status" value="ALT_INIT"/>
    <property type="molecule type" value="mRNA"/>
</dbReference>
<dbReference type="CCDS" id="CCDS14134.2"/>
<dbReference type="RefSeq" id="NP_000264.2">
    <property type="nucleotide sequence ID" value="NM_000273.3"/>
</dbReference>
<dbReference type="SMR" id="P51810"/>
<dbReference type="BioGRID" id="110989">
    <property type="interactions" value="2"/>
</dbReference>
<dbReference type="CORUM" id="P51810"/>
<dbReference type="DIP" id="DIP-53284N"/>
<dbReference type="FunCoup" id="P51810">
    <property type="interactions" value="140"/>
</dbReference>
<dbReference type="IntAct" id="P51810">
    <property type="interactions" value="6"/>
</dbReference>
<dbReference type="MINT" id="P51810"/>
<dbReference type="STRING" id="9606.ENSP00000417161"/>
<dbReference type="ChEMBL" id="CHEMBL4523867"/>
<dbReference type="TCDB" id="9.A.14.20.1">
    <property type="family name" value="the g-protein-coupled receptor (gpcr) family"/>
</dbReference>
<dbReference type="GlyCosmos" id="P51810">
    <property type="glycosylation" value="1 site, No reported glycans"/>
</dbReference>
<dbReference type="GlyGen" id="P51810">
    <property type="glycosylation" value="1 site"/>
</dbReference>
<dbReference type="iPTMnet" id="P51810"/>
<dbReference type="PhosphoSitePlus" id="P51810"/>
<dbReference type="BioMuta" id="GPR143"/>
<dbReference type="DMDM" id="3219999"/>
<dbReference type="MassIVE" id="P51810"/>
<dbReference type="PaxDb" id="9606-ENSP00000417161"/>
<dbReference type="PeptideAtlas" id="P51810"/>
<dbReference type="ProteomicsDB" id="56406"/>
<dbReference type="Antibodypedia" id="8143">
    <property type="antibodies" value="161 antibodies from 28 providers"/>
</dbReference>
<dbReference type="DNASU" id="4935"/>
<dbReference type="Ensembl" id="ENST00000467482.6">
    <property type="protein sequence ID" value="ENSP00000417161.1"/>
    <property type="gene ID" value="ENSG00000101850.13"/>
</dbReference>
<dbReference type="GeneID" id="4935"/>
<dbReference type="KEGG" id="hsa:4935"/>
<dbReference type="MANE-Select" id="ENST00000467482.6">
    <property type="protein sequence ID" value="ENSP00000417161.1"/>
    <property type="RefSeq nucleotide sequence ID" value="NM_000273.3"/>
    <property type="RefSeq protein sequence ID" value="NP_000264.2"/>
</dbReference>
<dbReference type="UCSC" id="uc004cst.3">
    <property type="organism name" value="human"/>
</dbReference>
<dbReference type="AGR" id="HGNC:20145"/>
<dbReference type="CTD" id="4935"/>
<dbReference type="DisGeNET" id="4935"/>
<dbReference type="GeneCards" id="GPR143"/>
<dbReference type="HGNC" id="HGNC:20145">
    <property type="gene designation" value="GPR143"/>
</dbReference>
<dbReference type="HPA" id="ENSG00000101850">
    <property type="expression patterns" value="Tissue enhanced (choroid)"/>
</dbReference>
<dbReference type="MalaCards" id="GPR143"/>
<dbReference type="MIM" id="300500">
    <property type="type" value="phenotype"/>
</dbReference>
<dbReference type="MIM" id="300808">
    <property type="type" value="gene"/>
</dbReference>
<dbReference type="MIM" id="300814">
    <property type="type" value="phenotype"/>
</dbReference>
<dbReference type="neXtProt" id="NX_P51810"/>
<dbReference type="OpenTargets" id="ENSG00000101850"/>
<dbReference type="Orphanet" id="54">
    <property type="disease" value="X-linked recessive ocular albinism"/>
</dbReference>
<dbReference type="PharmGKB" id="PA31872"/>
<dbReference type="VEuPathDB" id="HostDB:ENSG00000101850"/>
<dbReference type="eggNOG" id="ENOG502QQII">
    <property type="taxonomic scope" value="Eukaryota"/>
</dbReference>
<dbReference type="GeneTree" id="ENSGT00390000016722"/>
<dbReference type="HOGENOM" id="CLU_053538_1_1_1"/>
<dbReference type="InParanoid" id="P51810"/>
<dbReference type="OMA" id="IWPATFC"/>
<dbReference type="OrthoDB" id="10069455at2759"/>
<dbReference type="PAN-GO" id="P51810">
    <property type="GO annotations" value="9 GO annotations based on evolutionary models"/>
</dbReference>
<dbReference type="PhylomeDB" id="P51810"/>
<dbReference type="TreeFam" id="TF324849"/>
<dbReference type="PathwayCommons" id="P51810"/>
<dbReference type="Reactome" id="R-HSA-375280">
    <property type="pathway name" value="Amine ligand-binding receptors"/>
</dbReference>
<dbReference type="Reactome" id="R-HSA-416476">
    <property type="pathway name" value="G alpha (q) signalling events"/>
</dbReference>
<dbReference type="Reactome" id="R-HSA-9824585">
    <property type="pathway name" value="Regulation of MITF-M-dependent genes involved in pigmentation"/>
</dbReference>
<dbReference type="SignaLink" id="P51810"/>
<dbReference type="BioGRID-ORCS" id="4935">
    <property type="hits" value="7 hits in 767 CRISPR screens"/>
</dbReference>
<dbReference type="ChiTaRS" id="GPR143">
    <property type="organism name" value="human"/>
</dbReference>
<dbReference type="GeneWiki" id="GPR143"/>
<dbReference type="GenomeRNAi" id="4935"/>
<dbReference type="Pharos" id="P51810">
    <property type="development level" value="Tbio"/>
</dbReference>
<dbReference type="PRO" id="PR:P51810"/>
<dbReference type="Proteomes" id="UP000005640">
    <property type="component" value="Chromosome X"/>
</dbReference>
<dbReference type="RNAct" id="P51810">
    <property type="molecule type" value="protein"/>
</dbReference>
<dbReference type="Bgee" id="ENSG00000101850">
    <property type="expression patterns" value="Expressed in oocyte and 109 other cell types or tissues"/>
</dbReference>
<dbReference type="ExpressionAtlas" id="P51810">
    <property type="expression patterns" value="baseline and differential"/>
</dbReference>
<dbReference type="GO" id="GO:0016324">
    <property type="term" value="C:apical plasma membrane"/>
    <property type="evidence" value="ECO:0000314"/>
    <property type="project" value="UniProtKB"/>
</dbReference>
<dbReference type="GO" id="GO:0030054">
    <property type="term" value="C:cell junction"/>
    <property type="evidence" value="ECO:0000314"/>
    <property type="project" value="HPA"/>
</dbReference>
<dbReference type="GO" id="GO:0005737">
    <property type="term" value="C:cytoplasm"/>
    <property type="evidence" value="ECO:0000304"/>
    <property type="project" value="ProtInc"/>
</dbReference>
<dbReference type="GO" id="GO:0005794">
    <property type="term" value="C:Golgi apparatus"/>
    <property type="evidence" value="ECO:0000314"/>
    <property type="project" value="UniProtKB"/>
</dbReference>
<dbReference type="GO" id="GO:0005765">
    <property type="term" value="C:lysosomal membrane"/>
    <property type="evidence" value="ECO:0000314"/>
    <property type="project" value="UniProtKB"/>
</dbReference>
<dbReference type="GO" id="GO:0042470">
    <property type="term" value="C:melanosome"/>
    <property type="evidence" value="ECO:0000314"/>
    <property type="project" value="UniProtKB"/>
</dbReference>
<dbReference type="GO" id="GO:0033162">
    <property type="term" value="C:melanosome membrane"/>
    <property type="evidence" value="ECO:0000314"/>
    <property type="project" value="UniProtKB"/>
</dbReference>
<dbReference type="GO" id="GO:0016020">
    <property type="term" value="C:membrane"/>
    <property type="evidence" value="ECO:0000304"/>
    <property type="project" value="ProtInc"/>
</dbReference>
<dbReference type="GO" id="GO:0016604">
    <property type="term" value="C:nuclear body"/>
    <property type="evidence" value="ECO:0000314"/>
    <property type="project" value="HPA"/>
</dbReference>
<dbReference type="GO" id="GO:0005654">
    <property type="term" value="C:nucleoplasm"/>
    <property type="evidence" value="ECO:0000314"/>
    <property type="project" value="HPA"/>
</dbReference>
<dbReference type="GO" id="GO:0005886">
    <property type="term" value="C:plasma membrane"/>
    <property type="evidence" value="ECO:0000314"/>
    <property type="project" value="UniProtKB"/>
</dbReference>
<dbReference type="GO" id="GO:0035240">
    <property type="term" value="F:dopamine binding"/>
    <property type="evidence" value="ECO:0000314"/>
    <property type="project" value="UniProtKB"/>
</dbReference>
<dbReference type="GO" id="GO:0004930">
    <property type="term" value="F:G protein-coupled receptor activity"/>
    <property type="evidence" value="ECO:0000314"/>
    <property type="project" value="UniProtKB"/>
</dbReference>
<dbReference type="GO" id="GO:0072544">
    <property type="term" value="F:L-DOPA binding"/>
    <property type="evidence" value="ECO:0000314"/>
    <property type="project" value="UniProtKB"/>
</dbReference>
<dbReference type="GO" id="GO:0035643">
    <property type="term" value="F:L-DOPA receptor activity"/>
    <property type="evidence" value="ECO:0000314"/>
    <property type="project" value="UniProtKB"/>
</dbReference>
<dbReference type="GO" id="GO:0072545">
    <property type="term" value="F:L-tyrosine binding"/>
    <property type="evidence" value="ECO:0000314"/>
    <property type="project" value="UniProtKB"/>
</dbReference>
<dbReference type="GO" id="GO:0006726">
    <property type="term" value="P:eye pigment biosynthetic process"/>
    <property type="evidence" value="ECO:0000304"/>
    <property type="project" value="ProtInc"/>
</dbReference>
<dbReference type="GO" id="GO:0007186">
    <property type="term" value="P:G protein-coupled receptor signaling pathway"/>
    <property type="evidence" value="ECO:0000315"/>
    <property type="project" value="UniProtKB"/>
</dbReference>
<dbReference type="GO" id="GO:0032400">
    <property type="term" value="P:melanosome localization"/>
    <property type="evidence" value="ECO:0000314"/>
    <property type="project" value="UniProtKB"/>
</dbReference>
<dbReference type="GO" id="GO:0032438">
    <property type="term" value="P:melanosome organization"/>
    <property type="evidence" value="ECO:0000315"/>
    <property type="project" value="UniProtKB"/>
</dbReference>
<dbReference type="GO" id="GO:0032402">
    <property type="term" value="P:melanosome transport"/>
    <property type="evidence" value="ECO:0000314"/>
    <property type="project" value="UniProtKB"/>
</dbReference>
<dbReference type="GO" id="GO:0007200">
    <property type="term" value="P:phospholipase C-activating G protein-coupled receptor signaling pathway"/>
    <property type="evidence" value="ECO:0000314"/>
    <property type="project" value="UniProtKB"/>
</dbReference>
<dbReference type="GO" id="GO:1903056">
    <property type="term" value="P:regulation of melanosome organization"/>
    <property type="evidence" value="ECO:0007669"/>
    <property type="project" value="Ensembl"/>
</dbReference>
<dbReference type="GO" id="GO:1902908">
    <property type="term" value="P:regulation of melanosome transport"/>
    <property type="evidence" value="ECO:0007669"/>
    <property type="project" value="Ensembl"/>
</dbReference>
<dbReference type="GO" id="GO:0007165">
    <property type="term" value="P:signal transduction"/>
    <property type="evidence" value="ECO:0000304"/>
    <property type="project" value="ProtInc"/>
</dbReference>
<dbReference type="GO" id="GO:0007601">
    <property type="term" value="P:visual perception"/>
    <property type="evidence" value="ECO:0000304"/>
    <property type="project" value="ProtInc"/>
</dbReference>
<dbReference type="FunFam" id="1.20.1070.10:FF:000144">
    <property type="entry name" value="G protein-coupled receptor 143"/>
    <property type="match status" value="1"/>
</dbReference>
<dbReference type="Gene3D" id="1.20.1070.10">
    <property type="entry name" value="Rhodopsin 7-helix transmembrane proteins"/>
    <property type="match status" value="1"/>
</dbReference>
<dbReference type="InterPro" id="IPR001414">
    <property type="entry name" value="GPR143"/>
</dbReference>
<dbReference type="PANTHER" id="PTHR15177">
    <property type="entry name" value="G-PROTEIN COUPLED RECEPTOR 143"/>
    <property type="match status" value="1"/>
</dbReference>
<dbReference type="PANTHER" id="PTHR15177:SF2">
    <property type="entry name" value="G-PROTEIN COUPLED RECEPTOR 143"/>
    <property type="match status" value="1"/>
</dbReference>
<dbReference type="Pfam" id="PF02101">
    <property type="entry name" value="Ocular_alb"/>
    <property type="match status" value="1"/>
</dbReference>
<dbReference type="PRINTS" id="PR00965">
    <property type="entry name" value="OCULARALBNSM"/>
</dbReference>
<feature type="chain" id="PRO_0000195086" description="G-protein coupled receptor 143">
    <location>
        <begin position="1"/>
        <end position="404"/>
    </location>
</feature>
<feature type="topological domain" description="Extracellular" evidence="1">
    <location>
        <begin position="1"/>
        <end position="28"/>
    </location>
</feature>
<feature type="transmembrane region" description="Helical; Name=1" evidence="1">
    <location>
        <begin position="29"/>
        <end position="49"/>
    </location>
</feature>
<feature type="topological domain" description="Cytoplasmic" evidence="1">
    <location>
        <begin position="50"/>
        <end position="78"/>
    </location>
</feature>
<feature type="transmembrane region" description="Helical; Name=2" evidence="1">
    <location>
        <begin position="79"/>
        <end position="99"/>
    </location>
</feature>
<feature type="topological domain" description="Extracellular" evidence="1">
    <location>
        <begin position="100"/>
        <end position="124"/>
    </location>
</feature>
<feature type="transmembrane region" description="Helical; Name=3" evidence="1">
    <location>
        <begin position="125"/>
        <end position="145"/>
    </location>
</feature>
<feature type="topological domain" description="Cytoplasmic" evidence="1">
    <location>
        <begin position="146"/>
        <end position="149"/>
    </location>
</feature>
<feature type="transmembrane region" description="Helical; Name=4" evidence="1">
    <location>
        <begin position="150"/>
        <end position="170"/>
    </location>
</feature>
<feature type="topological domain" description="Extracellular" evidence="1">
    <location>
        <begin position="171"/>
        <end position="191"/>
    </location>
</feature>
<feature type="transmembrane region" description="Helical; Name=5" evidence="1">
    <location>
        <begin position="192"/>
        <end position="212"/>
    </location>
</feature>
<feature type="topological domain" description="Cytoplasmic" evidence="1">
    <location>
        <begin position="213"/>
        <end position="248"/>
    </location>
</feature>
<feature type="transmembrane region" description="Helical; Name=6" evidence="1">
    <location>
        <begin position="249"/>
        <end position="269"/>
    </location>
</feature>
<feature type="topological domain" description="Extracellular" evidence="1">
    <location>
        <begin position="270"/>
        <end position="292"/>
    </location>
</feature>
<feature type="transmembrane region" description="Helical; Name=7" evidence="1">
    <location>
        <begin position="293"/>
        <end position="313"/>
    </location>
</feature>
<feature type="topological domain" description="Cytoplasmic" evidence="1">
    <location>
        <begin position="314"/>
        <end position="404"/>
    </location>
</feature>
<feature type="region of interest" description="Necessary for its G protein-activation ability and normal distribution of melanosomes">
    <location>
        <begin position="221"/>
        <end position="238"/>
    </location>
</feature>
<feature type="region of interest" description="Disordered" evidence="2">
    <location>
        <begin position="338"/>
        <end position="404"/>
    </location>
</feature>
<feature type="short sequence motif" description="lysosomal/melanosomal membrane localization signal">
    <location>
        <begin position="222"/>
        <end position="231"/>
    </location>
</feature>
<feature type="short sequence motif" description="lysosomal/melanosomal membrane localization signal">
    <location>
        <begin position="329"/>
        <end position="330"/>
    </location>
</feature>
<feature type="compositionally biased region" description="Polar residues" evidence="2">
    <location>
        <begin position="355"/>
        <end position="366"/>
    </location>
</feature>
<feature type="glycosylation site" description="N-linked (GlcNAc...) asparagine" evidence="1">
    <location>
        <position position="106"/>
    </location>
</feature>
<feature type="sequence variant" id="VAR_018130" description="In OA1; results in altered glycosylation pattern and subcellular localization consistent with protein retention in the endoplasmic reticulum; lacks G protein-activation abilities; dbSNP:rs62635289." evidence="4 5">
    <original>R</original>
    <variation>C</variation>
    <location>
        <position position="5"/>
    </location>
</feature>
<feature type="sequence variant" id="VAR_005507" description="In OA1; results in altered glycosylation pattern and subcellular localization consistent with protein retention in the endoplasmic reticulum; dbSNP:rs62635018." evidence="4 19 21">
    <original>G</original>
    <variation>D</variation>
    <location>
        <position position="35"/>
    </location>
</feature>
<feature type="sequence variant" id="VAR_018131" description="In OA1; dbSNP:rs62635019." evidence="21">
    <original>L</original>
    <variation>R</variation>
    <location>
        <position position="39"/>
    </location>
</feature>
<feature type="sequence variant" id="VAR_018132" description="In OA1; results in altered glycosylation pattern and subcellular localization consistent with protein retention in the endoplasmic reticulum; dbSNP:rs62635024." evidence="4 5">
    <original>D</original>
    <variation>N</variation>
    <location>
        <position position="78"/>
    </location>
</feature>
<feature type="sequence variant" id="VAR_018133" description="In OA1; dbSNP:rs62635025." evidence="21">
    <original>D</original>
    <variation>V</variation>
    <location>
        <position position="78"/>
    </location>
</feature>
<feature type="sequence variant" id="VAR_063264" description="In OA1." evidence="16">
    <location>
        <position position="80"/>
    </location>
</feature>
<feature type="sequence variant" id="VAR_063265" description="In OA1." evidence="9">
    <original>G</original>
    <variation>V</variation>
    <location>
        <position position="81"/>
    </location>
</feature>
<feature type="sequence variant" id="VAR_005508" description="In OA1; results in altered glycosylation pattern and subcellular localization consistent with protein retention in the endoplasmic reticulum; dbSNP:rs62635027." evidence="4 19">
    <original>G</original>
    <variation>D</variation>
    <location>
        <position position="84"/>
    </location>
</feature>
<feature type="sequence variant" id="VAR_005509" description="In OA1; dbSNP:rs62635026." evidence="20">
    <original>G</original>
    <variation>R</variation>
    <location>
        <position position="84"/>
    </location>
</feature>
<feature type="sequence variant" id="VAR_063266" description="In NYS6; dbSNP:rs137852298." evidence="11">
    <original>S</original>
    <variation>F</variation>
    <location>
        <position position="89"/>
    </location>
</feature>
<feature type="sequence variant" id="VAR_063267" description="In OA1; dbSNP:rs62635030." evidence="7 13">
    <original>C</original>
    <variation>G</variation>
    <location>
        <position position="116"/>
    </location>
</feature>
<feature type="sequence variant" id="VAR_005510" description="In OA1; dbSNP:rs62635030." evidence="20">
    <original>C</original>
    <variation>R</variation>
    <location>
        <position position="116"/>
    </location>
</feature>
<feature type="sequence variant" id="VAR_018134" description="In OA1; results in altered glycosylation pattern and subcellular localization consistent with protein retention in the endoplasmic reticulum; dbSNP:rs62635029." evidence="4 5">
    <original>C</original>
    <variation>S</variation>
    <location>
        <position position="116"/>
    </location>
</feature>
<feature type="sequence variant" id="VAR_063268" description="In OA1; dbSNP:rs1191147473." evidence="9">
    <original>C</original>
    <variation>W</variation>
    <location>
        <position position="116"/>
    </location>
</feature>
<feature type="sequence variant" id="VAR_005511" description="In OA1; results in altered glycosylation pattern and subcellular localization consistent with protein retention in the endoplasmic reticulum; dbSNP:rs62635031." evidence="4 5 16 20">
    <original>G</original>
    <variation>E</variation>
    <location>
        <position position="118"/>
    </location>
</feature>
<feature type="sequence variant" id="VAR_018135" description="In OA1; dbSNP:rs62635032." evidence="5">
    <original>Q</original>
    <variation>R</variation>
    <location>
        <position position="124"/>
    </location>
</feature>
<feature type="sequence variant" id="VAR_063269" description="In OA1; dbSNP:rs2146699615." evidence="12">
    <original>W</original>
    <variation>R</variation>
    <location>
        <position position="132"/>
    </location>
</feature>
<feature type="sequence variant" id="VAR_005513" description="In OA1; results in altered glycosylation pattern and subcellular localization consistent with protein retention in the endoplasmic reticulum; dbSNP:rs137852296." evidence="4 20 21">
    <original>W</original>
    <variation>R</variation>
    <location>
        <position position="133"/>
    </location>
</feature>
<feature type="sequence variant" id="VAR_063270" description="In OA1." evidence="9">
    <original>L</original>
    <variation>P</variation>
    <location>
        <position position="134"/>
    </location>
</feature>
<feature type="sequence variant" id="VAR_005514" description="In OA1; dbSNP:rs62635762." evidence="20">
    <original>A</original>
    <variation>V</variation>
    <location>
        <position position="138"/>
    </location>
</feature>
<feature type="sequence variant" id="VAR_005515" description="In OA1; dbSNP:rs58933950." evidence="20">
    <original>S</original>
    <variation>N</variation>
    <location>
        <position position="152"/>
    </location>
</feature>
<feature type="sequence variant" id="VAR_063271" description="In OA1." evidence="9">
    <original>T</original>
    <variation>N</variation>
    <location>
        <position position="166"/>
    </location>
</feature>
<feature type="sequence variant" id="VAR_005516" description="In OA1; results in altered glycosylation pattern and subcellular localization consistent with protein retention in the endoplasmic reticulum; dbSNP:rs62635035." evidence="4 19">
    <original>A</original>
    <variation>D</variation>
    <location>
        <position position="173"/>
    </location>
</feature>
<feature type="sequence variant" id="VAR_063272" description="In OA1." evidence="12">
    <original>E</original>
    <variation>K</variation>
    <location>
        <position position="185"/>
    </location>
</feature>
<feature type="sequence variant" id="VAR_063273" description="In OA1." evidence="12">
    <original>R</original>
    <variation>P</variation>
    <location>
        <position position="186"/>
    </location>
</feature>
<feature type="sequence variant" id="VAR_063274" description="In OA1; dbSNP:rs199899645." evidence="12">
    <original>R</original>
    <variation>W</variation>
    <location>
        <position position="186"/>
    </location>
</feature>
<feature type="sequence variant" id="VAR_018136" description="In OA1; not delivered at the cell surface of melanocytic and non-melanocytic cells; dbSNP:rs62635037." evidence="5 8">
    <original>G</original>
    <variation>V</variation>
    <location>
        <position position="229"/>
    </location>
</feature>
<feature type="sequence variant" id="VAR_005517" description="In OA1; abnormal distribution of melanosomes; Not delivered at the cell surface of melanocytic and non-melanocytic cells; dbSNP:rs137852297." evidence="8 14 20">
    <original>T</original>
    <variation>K</variation>
    <location>
        <position position="232"/>
    </location>
</feature>
<feature type="sequence variant" id="VAR_018137" description="In OA1; dbSNP:rs62635038." evidence="21">
    <original>E</original>
    <variation>K</variation>
    <location>
        <position position="233"/>
    </location>
</feature>
<feature type="sequence variant" id="VAR_005518" description="In OA1; not delivered at the cell surface of melanocytic and non-melanocytic cells." evidence="8 20">
    <original>E</original>
    <variation>K</variation>
    <location>
        <position position="235"/>
    </location>
</feature>
<feature type="sequence variant" id="VAR_018138" description="In OA1; not delivered at the cell surface of melanocytic and non-melanocytic cells; dbSNP:rs62635040." evidence="5 8">
    <original>I</original>
    <variation>V</variation>
    <location>
        <position position="244"/>
    </location>
</feature>
<feature type="sequence variant" id="VAR_018139" description="In OA1; results in altered glycosylation pattern and subcellular localization consistent with protein retention in the endoplasmic reticulum." evidence="4 5">
    <original>I</original>
    <variation>N</variation>
    <location>
        <position position="261"/>
    </location>
</feature>
<feature type="sequence variant" id="VAR_018140" description="In OA1; dbSNP:rs62635043." evidence="5">
    <original>E</original>
    <variation>G</variation>
    <location>
        <position position="271"/>
    </location>
</feature>
<feature type="sequence variant" id="VAR_005519" description="In OA1; results in altered glycosylation pattern and subcellular localization consistent with protein retention in the endoplasmic reticulum; dbSNP:rs62635044." evidence="4 19">
    <location>
        <position position="290"/>
    </location>
</feature>
<feature type="sequence variant" id="VAR_018141" description="In OA1; dbSNP:rs62635046." evidence="5">
    <original>W</original>
    <variation>C</variation>
    <location>
        <position position="292"/>
    </location>
</feature>
<feature type="sequence variant" id="VAR_005520" description="In OA1; results in altered glycosylation pattern and subcellular localization consistent with protein retention in the endoplasmic reticulum; dbSNP:rs62635045." evidence="4 19">
    <original>W</original>
    <variation>G</variation>
    <location>
        <position position="292"/>
    </location>
</feature>
<feature type="mutagenesis site" description="Delivered to both at the cell surface and in vesicles of melanocytic and non-melanocytic cells. Strongly delivered at the cell surface of melanocytic and non-melanocytic cells; when associated with 329-A-A-330.">
    <original>LL</original>
    <variation>AA</variation>
    <location>
        <begin position="223"/>
        <end position="224"/>
    </location>
</feature>
<feature type="mutagenesis site" description="Mostly delivered at the cell surface of melanocytic and non-melanocytic cells. Strongly delivered at the cell surface of melanocytic and non-melanocytic cells; when associated with 224-A-A-225." evidence="8">
    <original>WE</original>
    <variation>AA</variation>
    <location>
        <begin position="329"/>
        <end position="330"/>
    </location>
</feature>
<sequence length="404" mass="43878">MASPRLGTFCCPTRDAATQLVLSFQPRAFHALCLGSGGLRLALGLLQLLPGRRPAGPGSPATSPPASVRILRAAAACDLLGCLGMVIRSTVWLGFPNFVDSVSDMNHTEIWPAAFCVGSAMWIQLLYSACFWWLFCYAVDAYLVIRRSAGLSTILLYHIMAWGLATLLCVEGAAMLYYPSVSRCERGLDHAIPHYVTMYLPLLLVLVANPILFQKTVTAVASLLKGRQGIYTENERRMGAVIKIRFFKIMLVLIICWLSNIINESLLFYLEMQTDINGGSLKPVRTAAKTTWFIMGILNPAQGFLLSLAFYGWTGCSLGFQSPRKEIQWESLTTSAAEGAHPSPLMPHENPASGKVSQVGGQTSDEALSMLSEGSDASTIEIHTASESCNKNEGDPALPTHGDL</sequence>
<proteinExistence type="evidence at protein level"/>
<gene>
    <name type="primary">GPR143</name>
    <name type="synonym">OA1</name>
</gene>
<protein>
    <recommendedName>
        <fullName>G-protein coupled receptor 143</fullName>
    </recommendedName>
    <alternativeName>
        <fullName>Ocular albinism type 1 protein</fullName>
    </alternativeName>
</protein>
<keyword id="KW-0015">Albinism</keyword>
<keyword id="KW-1003">Cell membrane</keyword>
<keyword id="KW-0225">Disease variant</keyword>
<keyword id="KW-0297">G-protein coupled receptor</keyword>
<keyword id="KW-0325">Glycoprotein</keyword>
<keyword id="KW-0458">Lysosome</keyword>
<keyword id="KW-0472">Membrane</keyword>
<keyword id="KW-1267">Proteomics identification</keyword>
<keyword id="KW-0675">Receptor</keyword>
<keyword id="KW-1185">Reference proteome</keyword>
<keyword id="KW-0807">Transducer</keyword>
<keyword id="KW-0812">Transmembrane</keyword>
<keyword id="KW-1133">Transmembrane helix</keyword>